<protein>
    <recommendedName>
        <fullName evidence="1">Large ribosomal subunit protein uL14</fullName>
    </recommendedName>
    <alternativeName>
        <fullName evidence="2">50S ribosomal protein L14</fullName>
    </alternativeName>
</protein>
<sequence>MIQTQSMLDVADNSGARRVMCIKVLGGSHRRYAGIGDIIKVTVKEAIPRGKVKKGQVMTAVVVRTRHGVRRADGSIIRFDGNAAVLLNNKQEPIGTRIFGPVTRELRSEKFMKIVSLAPEVL</sequence>
<proteinExistence type="inferred from homology"/>
<dbReference type="EMBL" id="CP000680">
    <property type="protein sequence ID" value="ABP86646.1"/>
    <property type="molecule type" value="Genomic_DNA"/>
</dbReference>
<dbReference type="SMR" id="A4XZ80"/>
<dbReference type="STRING" id="399739.Pmen_3899"/>
<dbReference type="KEGG" id="pmy:Pmen_3899"/>
<dbReference type="eggNOG" id="COG0093">
    <property type="taxonomic scope" value="Bacteria"/>
</dbReference>
<dbReference type="HOGENOM" id="CLU_095071_2_1_6"/>
<dbReference type="OrthoDB" id="9806379at2"/>
<dbReference type="GO" id="GO:0022625">
    <property type="term" value="C:cytosolic large ribosomal subunit"/>
    <property type="evidence" value="ECO:0007669"/>
    <property type="project" value="TreeGrafter"/>
</dbReference>
<dbReference type="GO" id="GO:0070180">
    <property type="term" value="F:large ribosomal subunit rRNA binding"/>
    <property type="evidence" value="ECO:0007669"/>
    <property type="project" value="TreeGrafter"/>
</dbReference>
<dbReference type="GO" id="GO:0003735">
    <property type="term" value="F:structural constituent of ribosome"/>
    <property type="evidence" value="ECO:0007669"/>
    <property type="project" value="InterPro"/>
</dbReference>
<dbReference type="GO" id="GO:0006412">
    <property type="term" value="P:translation"/>
    <property type="evidence" value="ECO:0007669"/>
    <property type="project" value="UniProtKB-UniRule"/>
</dbReference>
<dbReference type="CDD" id="cd00337">
    <property type="entry name" value="Ribosomal_uL14"/>
    <property type="match status" value="1"/>
</dbReference>
<dbReference type="FunFam" id="2.40.150.20:FF:000001">
    <property type="entry name" value="50S ribosomal protein L14"/>
    <property type="match status" value="1"/>
</dbReference>
<dbReference type="Gene3D" id="2.40.150.20">
    <property type="entry name" value="Ribosomal protein L14"/>
    <property type="match status" value="1"/>
</dbReference>
<dbReference type="HAMAP" id="MF_01367">
    <property type="entry name" value="Ribosomal_uL14"/>
    <property type="match status" value="1"/>
</dbReference>
<dbReference type="InterPro" id="IPR000218">
    <property type="entry name" value="Ribosomal_uL14"/>
</dbReference>
<dbReference type="InterPro" id="IPR005745">
    <property type="entry name" value="Ribosomal_uL14_bac-type"/>
</dbReference>
<dbReference type="InterPro" id="IPR019972">
    <property type="entry name" value="Ribosomal_uL14_CS"/>
</dbReference>
<dbReference type="InterPro" id="IPR036853">
    <property type="entry name" value="Ribosomal_uL14_sf"/>
</dbReference>
<dbReference type="NCBIfam" id="TIGR01067">
    <property type="entry name" value="rplN_bact"/>
    <property type="match status" value="1"/>
</dbReference>
<dbReference type="PANTHER" id="PTHR11761">
    <property type="entry name" value="50S/60S RIBOSOMAL PROTEIN L14/L23"/>
    <property type="match status" value="1"/>
</dbReference>
<dbReference type="PANTHER" id="PTHR11761:SF3">
    <property type="entry name" value="LARGE RIBOSOMAL SUBUNIT PROTEIN UL14M"/>
    <property type="match status" value="1"/>
</dbReference>
<dbReference type="Pfam" id="PF00238">
    <property type="entry name" value="Ribosomal_L14"/>
    <property type="match status" value="1"/>
</dbReference>
<dbReference type="SMART" id="SM01374">
    <property type="entry name" value="Ribosomal_L14"/>
    <property type="match status" value="1"/>
</dbReference>
<dbReference type="SUPFAM" id="SSF50193">
    <property type="entry name" value="Ribosomal protein L14"/>
    <property type="match status" value="1"/>
</dbReference>
<dbReference type="PROSITE" id="PS00049">
    <property type="entry name" value="RIBOSOMAL_L14"/>
    <property type="match status" value="1"/>
</dbReference>
<gene>
    <name evidence="1" type="primary">rplN</name>
    <name type="ordered locus">Pmen_3899</name>
</gene>
<feature type="chain" id="PRO_1000055678" description="Large ribosomal subunit protein uL14">
    <location>
        <begin position="1"/>
        <end position="122"/>
    </location>
</feature>
<reference key="1">
    <citation type="submission" date="2007-04" db="EMBL/GenBank/DDBJ databases">
        <title>Complete sequence of Pseudomonas mendocina ymp.</title>
        <authorList>
            <consortium name="US DOE Joint Genome Institute"/>
            <person name="Copeland A."/>
            <person name="Lucas S."/>
            <person name="Lapidus A."/>
            <person name="Barry K."/>
            <person name="Glavina del Rio T."/>
            <person name="Dalin E."/>
            <person name="Tice H."/>
            <person name="Pitluck S."/>
            <person name="Kiss H."/>
            <person name="Brettin T."/>
            <person name="Detter J.C."/>
            <person name="Bruce D."/>
            <person name="Han C."/>
            <person name="Schmutz J."/>
            <person name="Larimer F."/>
            <person name="Land M."/>
            <person name="Hauser L."/>
            <person name="Kyrpides N."/>
            <person name="Mikhailova N."/>
            <person name="Hersman L."/>
            <person name="Dubois J."/>
            <person name="Maurice P."/>
            <person name="Richardson P."/>
        </authorList>
    </citation>
    <scope>NUCLEOTIDE SEQUENCE [LARGE SCALE GENOMIC DNA]</scope>
    <source>
        <strain>ymp</strain>
    </source>
</reference>
<evidence type="ECO:0000255" key="1">
    <source>
        <dbReference type="HAMAP-Rule" id="MF_01367"/>
    </source>
</evidence>
<evidence type="ECO:0000305" key="2"/>
<organism>
    <name type="scientific">Ectopseudomonas mendocina (strain ymp)</name>
    <name type="common">Pseudomonas mendocina</name>
    <dbReference type="NCBI Taxonomy" id="399739"/>
    <lineage>
        <taxon>Bacteria</taxon>
        <taxon>Pseudomonadati</taxon>
        <taxon>Pseudomonadota</taxon>
        <taxon>Gammaproteobacteria</taxon>
        <taxon>Pseudomonadales</taxon>
        <taxon>Pseudomonadaceae</taxon>
        <taxon>Ectopseudomonas</taxon>
    </lineage>
</organism>
<comment type="function">
    <text evidence="1">Binds to 23S rRNA. Forms part of two intersubunit bridges in the 70S ribosome.</text>
</comment>
<comment type="subunit">
    <text evidence="1">Part of the 50S ribosomal subunit. Forms a cluster with proteins L3 and L19. In the 70S ribosome, L14 and L19 interact and together make contacts with the 16S rRNA in bridges B5 and B8.</text>
</comment>
<comment type="similarity">
    <text evidence="1">Belongs to the universal ribosomal protein uL14 family.</text>
</comment>
<accession>A4XZ80</accession>
<keyword id="KW-0687">Ribonucleoprotein</keyword>
<keyword id="KW-0689">Ribosomal protein</keyword>
<keyword id="KW-0694">RNA-binding</keyword>
<keyword id="KW-0699">rRNA-binding</keyword>
<name>RL14_ECTM1</name>